<name>Y4063_DICDI</name>
<evidence type="ECO:0000256" key="1">
    <source>
        <dbReference type="SAM" id="MobiDB-lite"/>
    </source>
</evidence>
<evidence type="ECO:0000305" key="2"/>
<organism>
    <name type="scientific">Dictyostelium discoideum</name>
    <name type="common">Social amoeba</name>
    <dbReference type="NCBI Taxonomy" id="44689"/>
    <lineage>
        <taxon>Eukaryota</taxon>
        <taxon>Amoebozoa</taxon>
        <taxon>Evosea</taxon>
        <taxon>Eumycetozoa</taxon>
        <taxon>Dictyostelia</taxon>
        <taxon>Dictyosteliales</taxon>
        <taxon>Dictyosteliaceae</taxon>
        <taxon>Dictyostelium</taxon>
    </lineage>
</organism>
<keyword id="KW-1185">Reference proteome</keyword>
<keyword id="KW-0677">Repeat</keyword>
<proteinExistence type="predicted"/>
<comment type="caution">
    <text evidence="2">The gene for this protein is duplicated in strains AX3 and AX4. These strains contain a duplication of a segment of 750 kb of chromosome 2 compared to the corresponding sequence in strain AX2.</text>
</comment>
<protein>
    <recommendedName>
        <fullName>FNIP repeat-containing protein DDB_G0274063/DDB_G0272642</fullName>
    </recommendedName>
</protein>
<dbReference type="EMBL" id="AAFI02000011">
    <property type="protein sequence ID" value="EAL70465.1"/>
    <property type="molecule type" value="Genomic_DNA"/>
</dbReference>
<dbReference type="EMBL" id="AAFI02000009">
    <property type="protein sequence ID" value="EAL70958.1"/>
    <property type="molecule type" value="Genomic_DNA"/>
</dbReference>
<dbReference type="RefSeq" id="XP_644390.1">
    <property type="nucleotide sequence ID" value="XM_639298.1"/>
</dbReference>
<dbReference type="RefSeq" id="XP_645023.1">
    <property type="nucleotide sequence ID" value="XM_639931.1"/>
</dbReference>
<dbReference type="SMR" id="Q556H2"/>
<dbReference type="PaxDb" id="44689-DDB0238841"/>
<dbReference type="EnsemblProtists" id="EAL70465">
    <property type="protein sequence ID" value="EAL70465"/>
    <property type="gene ID" value="DDB_G0274063"/>
</dbReference>
<dbReference type="EnsemblProtists" id="EAL70958">
    <property type="protein sequence ID" value="EAL70958"/>
    <property type="gene ID" value="DDB_G0272642"/>
</dbReference>
<dbReference type="GeneID" id="8618700"/>
<dbReference type="GeneID" id="8619276"/>
<dbReference type="KEGG" id="ddi:DDB_G0272642"/>
<dbReference type="KEGG" id="ddi:DDB_G0274063"/>
<dbReference type="dictyBase" id="DDB_G0272642"/>
<dbReference type="dictyBase" id="DDB_G0274063"/>
<dbReference type="VEuPathDB" id="AmoebaDB:DDB_G0274063"/>
<dbReference type="eggNOG" id="ENOG502RH82">
    <property type="taxonomic scope" value="Eukaryota"/>
</dbReference>
<dbReference type="HOGENOM" id="CLU_524224_0_0_1"/>
<dbReference type="InParanoid" id="Q556H2"/>
<dbReference type="OMA" id="QQINANC"/>
<dbReference type="PhylomeDB" id="Q556H2"/>
<dbReference type="PRO" id="PR:Q556H2"/>
<dbReference type="Proteomes" id="UP000002195">
    <property type="component" value="Chromosome 2"/>
</dbReference>
<dbReference type="InterPro" id="IPR008615">
    <property type="entry name" value="FNIP"/>
</dbReference>
<dbReference type="InterPro" id="IPR051251">
    <property type="entry name" value="STK_FNIP-Repeat"/>
</dbReference>
<dbReference type="PANTHER" id="PTHR32134">
    <property type="entry name" value="FNIP REPEAT-CONTAINING PROTEIN"/>
    <property type="match status" value="1"/>
</dbReference>
<dbReference type="PANTHER" id="PTHR32134:SF183">
    <property type="entry name" value="FNIP REPEAT-CONTAINING PROTEIN-RELATED"/>
    <property type="match status" value="1"/>
</dbReference>
<dbReference type="Pfam" id="PF05725">
    <property type="entry name" value="FNIP"/>
    <property type="match status" value="5"/>
</dbReference>
<accession>Q556H2</accession>
<accession>Q8MNJ4</accession>
<reference key="1">
    <citation type="journal article" date="2002" name="Nature">
        <title>Sequence and analysis of chromosome 2 of Dictyostelium discoideum.</title>
        <authorList>
            <person name="Gloeckner G."/>
            <person name="Eichinger L."/>
            <person name="Szafranski K."/>
            <person name="Pachebat J.A."/>
            <person name="Bankier A.T."/>
            <person name="Dear P.H."/>
            <person name="Lehmann R."/>
            <person name="Baumgart C."/>
            <person name="Parra G."/>
            <person name="Abril J.F."/>
            <person name="Guigo R."/>
            <person name="Kumpf K."/>
            <person name="Tunggal B."/>
            <person name="Cox E.C."/>
            <person name="Quail M.A."/>
            <person name="Platzer M."/>
            <person name="Rosenthal A."/>
            <person name="Noegel A.A."/>
        </authorList>
    </citation>
    <scope>NUCLEOTIDE SEQUENCE [LARGE SCALE GENOMIC DNA]</scope>
    <source>
        <strain>AX4</strain>
    </source>
</reference>
<reference key="2">
    <citation type="journal article" date="2005" name="Nature">
        <title>The genome of the social amoeba Dictyostelium discoideum.</title>
        <authorList>
            <person name="Eichinger L."/>
            <person name="Pachebat J.A."/>
            <person name="Gloeckner G."/>
            <person name="Rajandream M.A."/>
            <person name="Sucgang R."/>
            <person name="Berriman M."/>
            <person name="Song J."/>
            <person name="Olsen R."/>
            <person name="Szafranski K."/>
            <person name="Xu Q."/>
            <person name="Tunggal B."/>
            <person name="Kummerfeld S."/>
            <person name="Madera M."/>
            <person name="Konfortov B.A."/>
            <person name="Rivero F."/>
            <person name="Bankier A.T."/>
            <person name="Lehmann R."/>
            <person name="Hamlin N."/>
            <person name="Davies R."/>
            <person name="Gaudet P."/>
            <person name="Fey P."/>
            <person name="Pilcher K."/>
            <person name="Chen G."/>
            <person name="Saunders D."/>
            <person name="Sodergren E.J."/>
            <person name="Davis P."/>
            <person name="Kerhornou A."/>
            <person name="Nie X."/>
            <person name="Hall N."/>
            <person name="Anjard C."/>
            <person name="Hemphill L."/>
            <person name="Bason N."/>
            <person name="Farbrother P."/>
            <person name="Desany B."/>
            <person name="Just E."/>
            <person name="Morio T."/>
            <person name="Rost R."/>
            <person name="Churcher C.M."/>
            <person name="Cooper J."/>
            <person name="Haydock S."/>
            <person name="van Driessche N."/>
            <person name="Cronin A."/>
            <person name="Goodhead I."/>
            <person name="Muzny D.M."/>
            <person name="Mourier T."/>
            <person name="Pain A."/>
            <person name="Lu M."/>
            <person name="Harper D."/>
            <person name="Lindsay R."/>
            <person name="Hauser H."/>
            <person name="James K.D."/>
            <person name="Quiles M."/>
            <person name="Madan Babu M."/>
            <person name="Saito T."/>
            <person name="Buchrieser C."/>
            <person name="Wardroper A."/>
            <person name="Felder M."/>
            <person name="Thangavelu M."/>
            <person name="Johnson D."/>
            <person name="Knights A."/>
            <person name="Loulseged H."/>
            <person name="Mungall K.L."/>
            <person name="Oliver K."/>
            <person name="Price C."/>
            <person name="Quail M.A."/>
            <person name="Urushihara H."/>
            <person name="Hernandez J."/>
            <person name="Rabbinowitsch E."/>
            <person name="Steffen D."/>
            <person name="Sanders M."/>
            <person name="Ma J."/>
            <person name="Kohara Y."/>
            <person name="Sharp S."/>
            <person name="Simmonds M.N."/>
            <person name="Spiegler S."/>
            <person name="Tivey A."/>
            <person name="Sugano S."/>
            <person name="White B."/>
            <person name="Walker D."/>
            <person name="Woodward J.R."/>
            <person name="Winckler T."/>
            <person name="Tanaka Y."/>
            <person name="Shaulsky G."/>
            <person name="Schleicher M."/>
            <person name="Weinstock G.M."/>
            <person name="Rosenthal A."/>
            <person name="Cox E.C."/>
            <person name="Chisholm R.L."/>
            <person name="Gibbs R.A."/>
            <person name="Loomis W.F."/>
            <person name="Platzer M."/>
            <person name="Kay R.R."/>
            <person name="Williams J.G."/>
            <person name="Dear P.H."/>
            <person name="Noegel A.A."/>
            <person name="Barrell B.G."/>
            <person name="Kuspa A."/>
        </authorList>
    </citation>
    <scope>NUCLEOTIDE SEQUENCE [LARGE SCALE GENOMIC DNA]</scope>
    <source>
        <strain>AX4</strain>
    </source>
</reference>
<gene>
    <name type="ORF">DDB_G0274063</name>
</gene>
<gene>
    <name type="ORF">DDB_G0272642</name>
</gene>
<sequence>MKFSRFKSRNTNYYTNTIITTETQLNNSNNNNFNNTTTINHFNKIHQQQSNNNNNNNNNNNNNNNNNNFINFSNHTNNINNNIDNRSDKKRKLNCMEKSNISSSSPYTLTSTPSSSSSSSSCESSLLNLNNEKLIEDKIISFSNENVGNIKIISMSDSKFTIYNSNNTDYKELLFWKVWRNFFLKNEILFHQRLYNLYSSFEFNDLKSLLNFQYREYLQHITFSFYFDEPLSLINFKNNNNYNNNNIFPNSVKKITFGYSFNQAINQNSFSPNSSSLTSLEFGESFNQDIQINSLPPSLTCLKFGKNFNCPLSLGVLPLSGNLKSISFGLSYNQPIQYIPNGVEKLKIGGNSVYNNKNNNVNNKNNNKINKYPNSIKIFKFDKYFNDEIMVGTIPNSVLKVKFGVQFNREISMEQIPCSVTEIDFGLKWNQPLNEFSLPKNGNLKSIIFSHFFNQQINANCLPDGLTHLKFGPLYSKEINLNHLPSSIEILMFHNSFQSLNLLKNYNNLNNKKIQIIYYN</sequence>
<feature type="chain" id="PRO_0000363976" description="FNIP repeat-containing protein DDB_G0274063/DDB_G0272642">
    <location>
        <begin position="1"/>
        <end position="520"/>
    </location>
</feature>
<feature type="repeat" description="FNIP 1">
    <location>
        <begin position="242"/>
        <end position="285"/>
    </location>
</feature>
<feature type="repeat" description="FNIP 2">
    <location>
        <begin position="286"/>
        <end position="331"/>
    </location>
</feature>
<feature type="repeat" description="FNIP 3">
    <location>
        <begin position="332"/>
        <end position="406"/>
    </location>
</feature>
<feature type="repeat" description="FNIP 4">
    <location>
        <begin position="453"/>
        <end position="496"/>
    </location>
</feature>
<feature type="region of interest" description="Disordered" evidence="1">
    <location>
        <begin position="47"/>
        <end position="86"/>
    </location>
</feature>
<feature type="region of interest" description="Disordered" evidence="1">
    <location>
        <begin position="100"/>
        <end position="121"/>
    </location>
</feature>
<feature type="compositionally biased region" description="Low complexity" evidence="1">
    <location>
        <begin position="51"/>
        <end position="84"/>
    </location>
</feature>